<protein>
    <recommendedName>
        <fullName evidence="1">Proteasome subunit beta 1</fullName>
        <ecNumber evidence="1">3.4.25.1</ecNumber>
    </recommendedName>
    <alternativeName>
        <fullName evidence="1">20S proteasome beta subunit 1</fullName>
    </alternativeName>
    <alternativeName>
        <fullName evidence="1">Proteasome core protein PsmB 1</fullName>
    </alternativeName>
</protein>
<name>PSB1_SULAC</name>
<comment type="function">
    <text evidence="1">Component of the proteasome core, a large protease complex with broad specificity involved in protein degradation.</text>
</comment>
<comment type="catalytic activity">
    <reaction evidence="1">
        <text>Cleavage of peptide bonds with very broad specificity.</text>
        <dbReference type="EC" id="3.4.25.1"/>
    </reaction>
</comment>
<comment type="activity regulation">
    <text evidence="1">The formation of the proteasomal ATPase PAN-20S proteasome complex, via the docking of the C-termini of PAN into the intersubunit pockets in the alpha-rings, triggers opening of the gate for substrate entry. Interconversion between the open-gate and close-gate conformations leads to a dynamic regulation of the 20S proteasome proteolysis activity.</text>
</comment>
<comment type="subunit">
    <text evidence="1">The 20S proteasome core is composed of 14 alpha and 14 beta subunits that assemble into four stacked heptameric rings, resulting in a barrel-shaped structure. The two inner rings, each composed of seven catalytic beta subunits, are sandwiched by two outer rings, each composed of seven alpha subunits. The catalytic chamber with the active sites is on the inside of the barrel. Has a gated structure, the ends of the cylinder being occluded by the N-termini of the alpha-subunits. Is capped at one or both ends by the proteasome regulatory ATPase, PAN.</text>
</comment>
<comment type="subcellular location">
    <subcellularLocation>
        <location evidence="1">Cytoplasm</location>
    </subcellularLocation>
</comment>
<comment type="similarity">
    <text evidence="1">Belongs to the peptidase T1B family.</text>
</comment>
<reference key="1">
    <citation type="journal article" date="2005" name="J. Bacteriol.">
        <title>The genome of Sulfolobus acidocaldarius, a model organism of the Crenarchaeota.</title>
        <authorList>
            <person name="Chen L."/>
            <person name="Bruegger K."/>
            <person name="Skovgaard M."/>
            <person name="Redder P."/>
            <person name="She Q."/>
            <person name="Torarinsson E."/>
            <person name="Greve B."/>
            <person name="Awayez M."/>
            <person name="Zibat A."/>
            <person name="Klenk H.-P."/>
            <person name="Garrett R.A."/>
        </authorList>
    </citation>
    <scope>NUCLEOTIDE SEQUENCE [LARGE SCALE GENOMIC DNA]</scope>
    <source>
        <strain>ATCC 33909 / DSM 639 / JCM 8929 / NBRC 15157 / NCIMB 11770</strain>
    </source>
</reference>
<dbReference type="EC" id="3.4.25.1" evidence="1"/>
<dbReference type="EMBL" id="CP000077">
    <property type="protein sequence ID" value="AAY80046.1"/>
    <property type="molecule type" value="Genomic_DNA"/>
</dbReference>
<dbReference type="RefSeq" id="WP_011277548.1">
    <property type="nucleotide sequence ID" value="NC_007181.1"/>
</dbReference>
<dbReference type="PDB" id="6Z46">
    <property type="method" value="X-ray"/>
    <property type="resolution" value="3.70 A"/>
    <property type="chains" value="H/I/J/K/L/M/N/V/W/X/Y/Z/a/b=7-195"/>
</dbReference>
<dbReference type="PDBsum" id="6Z46"/>
<dbReference type="SMR" id="Q4JAY3"/>
<dbReference type="STRING" id="330779.Saci_0662"/>
<dbReference type="GeneID" id="14551181"/>
<dbReference type="KEGG" id="sai:Saci_0662"/>
<dbReference type="PATRIC" id="fig|330779.12.peg.632"/>
<dbReference type="eggNOG" id="arCOG00970">
    <property type="taxonomic scope" value="Archaea"/>
</dbReference>
<dbReference type="HOGENOM" id="CLU_035750_7_2_2"/>
<dbReference type="Proteomes" id="UP000001018">
    <property type="component" value="Chromosome"/>
</dbReference>
<dbReference type="GO" id="GO:0005737">
    <property type="term" value="C:cytoplasm"/>
    <property type="evidence" value="ECO:0007669"/>
    <property type="project" value="UniProtKB-SubCell"/>
</dbReference>
<dbReference type="GO" id="GO:0019774">
    <property type="term" value="C:proteasome core complex, beta-subunit complex"/>
    <property type="evidence" value="ECO:0007669"/>
    <property type="project" value="UniProtKB-UniRule"/>
</dbReference>
<dbReference type="GO" id="GO:0004298">
    <property type="term" value="F:threonine-type endopeptidase activity"/>
    <property type="evidence" value="ECO:0007669"/>
    <property type="project" value="UniProtKB-UniRule"/>
</dbReference>
<dbReference type="GO" id="GO:0010498">
    <property type="term" value="P:proteasomal protein catabolic process"/>
    <property type="evidence" value="ECO:0007669"/>
    <property type="project" value="UniProtKB-UniRule"/>
</dbReference>
<dbReference type="Gene3D" id="3.60.20.10">
    <property type="entry name" value="Glutamine Phosphoribosylpyrophosphate, subunit 1, domain 1"/>
    <property type="match status" value="1"/>
</dbReference>
<dbReference type="HAMAP" id="MF_02113_A">
    <property type="entry name" value="Proteasome_B_A"/>
    <property type="match status" value="1"/>
</dbReference>
<dbReference type="InterPro" id="IPR029055">
    <property type="entry name" value="Ntn_hydrolases_N"/>
</dbReference>
<dbReference type="InterPro" id="IPR019983">
    <property type="entry name" value="Pept_T1A_Psome_bsu_arc"/>
</dbReference>
<dbReference type="InterPro" id="IPR000243">
    <property type="entry name" value="Pept_T1A_subB"/>
</dbReference>
<dbReference type="InterPro" id="IPR001353">
    <property type="entry name" value="Proteasome_sua/b"/>
</dbReference>
<dbReference type="InterPro" id="IPR023333">
    <property type="entry name" value="Proteasome_suB-type"/>
</dbReference>
<dbReference type="NCBIfam" id="TIGR03634">
    <property type="entry name" value="arc_protsome_B"/>
    <property type="match status" value="1"/>
</dbReference>
<dbReference type="PANTHER" id="PTHR32194:SF0">
    <property type="entry name" value="ATP-DEPENDENT PROTEASE SUBUNIT HSLV"/>
    <property type="match status" value="1"/>
</dbReference>
<dbReference type="PANTHER" id="PTHR32194">
    <property type="entry name" value="METALLOPROTEASE TLDD"/>
    <property type="match status" value="1"/>
</dbReference>
<dbReference type="Pfam" id="PF00227">
    <property type="entry name" value="Proteasome"/>
    <property type="match status" value="1"/>
</dbReference>
<dbReference type="PRINTS" id="PR00141">
    <property type="entry name" value="PROTEASOME"/>
</dbReference>
<dbReference type="SUPFAM" id="SSF56235">
    <property type="entry name" value="N-terminal nucleophile aminohydrolases (Ntn hydrolases)"/>
    <property type="match status" value="1"/>
</dbReference>
<dbReference type="PROSITE" id="PS51476">
    <property type="entry name" value="PROTEASOME_BETA_2"/>
    <property type="match status" value="1"/>
</dbReference>
<proteinExistence type="evidence at protein level"/>
<sequence>MEELPATAIGIKTKDGVVLAAERRLSYGDFVLSKSARKVFKLGRFGIAGAGIVGDIQTLTRIMNVEIKYYEMYNSRKISARAAAKLLSVILYQNKVLPYISELLFGGVDEDGPKLFILDPIGSLIEDSYAAVGSGARVAIGVLEAEYNESLTSEAAKELAIKSMKSAVERDVMSGDGIDILIINKNNIYEDFIKI</sequence>
<organism>
    <name type="scientific">Sulfolobus acidocaldarius (strain ATCC 33909 / DSM 639 / JCM 8929 / NBRC 15157 / NCIMB 11770)</name>
    <dbReference type="NCBI Taxonomy" id="330779"/>
    <lineage>
        <taxon>Archaea</taxon>
        <taxon>Thermoproteota</taxon>
        <taxon>Thermoprotei</taxon>
        <taxon>Sulfolobales</taxon>
        <taxon>Sulfolobaceae</taxon>
        <taxon>Sulfolobus</taxon>
    </lineage>
</organism>
<feature type="propeptide" id="PRO_0000397424" description="Removed in mature form; by autocatalysis" evidence="1">
    <location>
        <begin position="1"/>
        <end position="6"/>
    </location>
</feature>
<feature type="chain" id="PRO_0000397425" description="Proteasome subunit beta 1">
    <location>
        <begin position="7"/>
        <end position="195"/>
    </location>
</feature>
<feature type="active site" description="Nucleophile" evidence="1">
    <location>
        <position position="7"/>
    </location>
</feature>
<keyword id="KW-0002">3D-structure</keyword>
<keyword id="KW-0068">Autocatalytic cleavage</keyword>
<keyword id="KW-0963">Cytoplasm</keyword>
<keyword id="KW-0378">Hydrolase</keyword>
<keyword id="KW-0645">Protease</keyword>
<keyword id="KW-0647">Proteasome</keyword>
<keyword id="KW-1185">Reference proteome</keyword>
<keyword id="KW-0888">Threonine protease</keyword>
<keyword id="KW-0865">Zymogen</keyword>
<evidence type="ECO:0000255" key="1">
    <source>
        <dbReference type="HAMAP-Rule" id="MF_02113"/>
    </source>
</evidence>
<accession>Q4JAY3</accession>
<gene>
    <name evidence="1" type="primary">psmB1</name>
    <name type="ordered locus">Saci_0662</name>
</gene>